<keyword id="KW-0963">Cytoplasm</keyword>
<keyword id="KW-0520">NAD</keyword>
<keyword id="KW-0560">Oxidoreductase</keyword>
<keyword id="KW-1185">Reference proteome</keyword>
<proteinExistence type="inferred from homology"/>
<protein>
    <recommendedName>
        <fullName>Uncharacterized oxidoreductase DltE</fullName>
        <ecNumber>1.-.-.-</ecNumber>
    </recommendedName>
</protein>
<name>DLTE_BACSU</name>
<dbReference type="EC" id="1.-.-.-"/>
<dbReference type="EMBL" id="X73124">
    <property type="protein sequence ID" value="CAA51557.1"/>
    <property type="molecule type" value="Genomic_DNA"/>
</dbReference>
<dbReference type="EMBL" id="AL009126">
    <property type="protein sequence ID" value="CAB15880.2"/>
    <property type="molecule type" value="Genomic_DNA"/>
</dbReference>
<dbReference type="PIR" id="S39656">
    <property type="entry name" value="S39656"/>
</dbReference>
<dbReference type="RefSeq" id="NP_391733.2">
    <property type="nucleotide sequence ID" value="NC_000964.3"/>
</dbReference>
<dbReference type="RefSeq" id="WP_003242574.1">
    <property type="nucleotide sequence ID" value="NZ_OZ025638.1"/>
</dbReference>
<dbReference type="SMR" id="P39577"/>
<dbReference type="FunCoup" id="P39577">
    <property type="interactions" value="109"/>
</dbReference>
<dbReference type="STRING" id="224308.BSU38540"/>
<dbReference type="PaxDb" id="224308-BSU38540"/>
<dbReference type="DNASU" id="937369"/>
<dbReference type="EnsemblBacteria" id="CAB15880">
    <property type="protein sequence ID" value="CAB15880"/>
    <property type="gene ID" value="BSU_38540"/>
</dbReference>
<dbReference type="GeneID" id="937369"/>
<dbReference type="KEGG" id="bsu:BSU38540"/>
<dbReference type="PATRIC" id="fig|224308.179.peg.4173"/>
<dbReference type="eggNOG" id="COG3967">
    <property type="taxonomic scope" value="Bacteria"/>
</dbReference>
<dbReference type="InParanoid" id="P39577"/>
<dbReference type="OrthoDB" id="9810734at2"/>
<dbReference type="PhylomeDB" id="P39577"/>
<dbReference type="BioCyc" id="BSUB:BSU38540-MONOMER"/>
<dbReference type="Proteomes" id="UP000001570">
    <property type="component" value="Chromosome"/>
</dbReference>
<dbReference type="GO" id="GO:0005737">
    <property type="term" value="C:cytoplasm"/>
    <property type="evidence" value="ECO:0007669"/>
    <property type="project" value="UniProtKB-SubCell"/>
</dbReference>
<dbReference type="GO" id="GO:0016020">
    <property type="term" value="C:membrane"/>
    <property type="evidence" value="ECO:0000318"/>
    <property type="project" value="GO_Central"/>
</dbReference>
<dbReference type="GO" id="GO:0016491">
    <property type="term" value="F:oxidoreductase activity"/>
    <property type="evidence" value="ECO:0007669"/>
    <property type="project" value="UniProtKB-KW"/>
</dbReference>
<dbReference type="CDD" id="cd05370">
    <property type="entry name" value="SDR_c2"/>
    <property type="match status" value="1"/>
</dbReference>
<dbReference type="Gene3D" id="3.40.50.720">
    <property type="entry name" value="NAD(P)-binding Rossmann-like Domain"/>
    <property type="match status" value="1"/>
</dbReference>
<dbReference type="InterPro" id="IPR036291">
    <property type="entry name" value="NAD(P)-bd_dom_sf"/>
</dbReference>
<dbReference type="InterPro" id="IPR020904">
    <property type="entry name" value="Sc_DH/Rdtase_CS"/>
</dbReference>
<dbReference type="InterPro" id="IPR002347">
    <property type="entry name" value="SDR_fam"/>
</dbReference>
<dbReference type="PANTHER" id="PTHR44196">
    <property type="entry name" value="DEHYDROGENASE/REDUCTASE SDR FAMILY MEMBER 7B"/>
    <property type="match status" value="1"/>
</dbReference>
<dbReference type="PANTHER" id="PTHR44196:SF1">
    <property type="entry name" value="DEHYDROGENASE_REDUCTASE SDR FAMILY MEMBER 7B"/>
    <property type="match status" value="1"/>
</dbReference>
<dbReference type="Pfam" id="PF00106">
    <property type="entry name" value="adh_short"/>
    <property type="match status" value="1"/>
</dbReference>
<dbReference type="PRINTS" id="PR00081">
    <property type="entry name" value="GDHRDH"/>
</dbReference>
<dbReference type="PRINTS" id="PR00080">
    <property type="entry name" value="SDRFAMILY"/>
</dbReference>
<dbReference type="SUPFAM" id="SSF51735">
    <property type="entry name" value="NAD(P)-binding Rossmann-fold domains"/>
    <property type="match status" value="1"/>
</dbReference>
<dbReference type="PROSITE" id="PS00061">
    <property type="entry name" value="ADH_SHORT"/>
    <property type="match status" value="1"/>
</dbReference>
<accession>P39577</accession>
<sequence>MKMTNNTVLITGGSAGIGLELAKRLLELGNEVIICGRSEARLAEAKQQLPNIHTKQCDVADRSQREALYEWALKEYPNLNVLVNNAGIQKEIDFKKGTEELFVDGDEIELNFQAPVHLSALFTPHLMKQPEAAIVQVTSGLAFNPLAVYPVYCATKAALHSFSLTLRHQLRDTSVEVIEMAPPMVDTGLNQKSRDKQGLTYRGISSEEYVQYFLDGLKEGKQEITNERVEGLRDATRADYDRLFEQMNTQEN</sequence>
<feature type="chain" id="PRO_0000054658" description="Uncharacterized oxidoreductase DltE">
    <location>
        <begin position="1"/>
        <end position="252"/>
    </location>
</feature>
<feature type="active site" description="Proton acceptor" evidence="2">
    <location>
        <position position="152"/>
    </location>
</feature>
<feature type="binding site" evidence="1">
    <location>
        <begin position="9"/>
        <end position="33"/>
    </location>
    <ligand>
        <name>NADP(+)</name>
        <dbReference type="ChEBI" id="CHEBI:58349"/>
    </ligand>
</feature>
<feature type="binding site" evidence="1">
    <location>
        <position position="139"/>
    </location>
    <ligand>
        <name>substrate</name>
    </ligand>
</feature>
<feature type="sequence conflict" description="In Ref. 1; CAA51557." evidence="4" ref="1">
    <original>QL</original>
    <variation>HV</variation>
    <location>
        <begin position="169"/>
        <end position="170"/>
    </location>
</feature>
<organism>
    <name type="scientific">Bacillus subtilis (strain 168)</name>
    <dbReference type="NCBI Taxonomy" id="224308"/>
    <lineage>
        <taxon>Bacteria</taxon>
        <taxon>Bacillati</taxon>
        <taxon>Bacillota</taxon>
        <taxon>Bacilli</taxon>
        <taxon>Bacillales</taxon>
        <taxon>Bacillaceae</taxon>
        <taxon>Bacillus</taxon>
    </lineage>
</organism>
<comment type="subcellular location">
    <subcellularLocation>
        <location evidence="4">Cytoplasm</location>
    </subcellularLocation>
</comment>
<comment type="disruption phenotype">
    <text evidence="3">Cells lacking this gene have no defect in lipoteichoic acid or wall teichoic acid synthesis.</text>
</comment>
<comment type="similarity">
    <text evidence="4">Belongs to the short-chain dehydrogenases/reductases (SDR) family.</text>
</comment>
<reference key="1">
    <citation type="journal article" date="1993" name="Mol. Microbiol.">
        <title>Bacillus subtilis genome project: cloning and sequencing of the 97 kb region from 325 degrees to 333 degrees.</title>
        <authorList>
            <person name="Glaser P."/>
            <person name="Kunst F."/>
            <person name="Arnaud M."/>
            <person name="Coudart M.P."/>
            <person name="Gonzales W."/>
            <person name="Hullo M.-F."/>
            <person name="Ionescu M."/>
            <person name="Lubochinsky B."/>
            <person name="Marcelino L."/>
            <person name="Moszer I."/>
            <person name="Presecan E."/>
            <person name="Santana M."/>
            <person name="Schneider E."/>
            <person name="Schweizer J."/>
            <person name="Vertes A."/>
            <person name="Rapoport G."/>
            <person name="Danchin A."/>
        </authorList>
    </citation>
    <scope>NUCLEOTIDE SEQUENCE [GENOMIC DNA]</scope>
    <source>
        <strain>168</strain>
    </source>
</reference>
<reference key="2">
    <citation type="journal article" date="1997" name="Nature">
        <title>The complete genome sequence of the Gram-positive bacterium Bacillus subtilis.</title>
        <authorList>
            <person name="Kunst F."/>
            <person name="Ogasawara N."/>
            <person name="Moszer I."/>
            <person name="Albertini A.M."/>
            <person name="Alloni G."/>
            <person name="Azevedo V."/>
            <person name="Bertero M.G."/>
            <person name="Bessieres P."/>
            <person name="Bolotin A."/>
            <person name="Borchert S."/>
            <person name="Borriss R."/>
            <person name="Boursier L."/>
            <person name="Brans A."/>
            <person name="Braun M."/>
            <person name="Brignell S.C."/>
            <person name="Bron S."/>
            <person name="Brouillet S."/>
            <person name="Bruschi C.V."/>
            <person name="Caldwell B."/>
            <person name="Capuano V."/>
            <person name="Carter N.M."/>
            <person name="Choi S.-K."/>
            <person name="Codani J.-J."/>
            <person name="Connerton I.F."/>
            <person name="Cummings N.J."/>
            <person name="Daniel R.A."/>
            <person name="Denizot F."/>
            <person name="Devine K.M."/>
            <person name="Duesterhoeft A."/>
            <person name="Ehrlich S.D."/>
            <person name="Emmerson P.T."/>
            <person name="Entian K.-D."/>
            <person name="Errington J."/>
            <person name="Fabret C."/>
            <person name="Ferrari E."/>
            <person name="Foulger D."/>
            <person name="Fritz C."/>
            <person name="Fujita M."/>
            <person name="Fujita Y."/>
            <person name="Fuma S."/>
            <person name="Galizzi A."/>
            <person name="Galleron N."/>
            <person name="Ghim S.-Y."/>
            <person name="Glaser P."/>
            <person name="Goffeau A."/>
            <person name="Golightly E.J."/>
            <person name="Grandi G."/>
            <person name="Guiseppi G."/>
            <person name="Guy B.J."/>
            <person name="Haga K."/>
            <person name="Haiech J."/>
            <person name="Harwood C.R."/>
            <person name="Henaut A."/>
            <person name="Hilbert H."/>
            <person name="Holsappel S."/>
            <person name="Hosono S."/>
            <person name="Hullo M.-F."/>
            <person name="Itaya M."/>
            <person name="Jones L.-M."/>
            <person name="Joris B."/>
            <person name="Karamata D."/>
            <person name="Kasahara Y."/>
            <person name="Klaerr-Blanchard M."/>
            <person name="Klein C."/>
            <person name="Kobayashi Y."/>
            <person name="Koetter P."/>
            <person name="Koningstein G."/>
            <person name="Krogh S."/>
            <person name="Kumano M."/>
            <person name="Kurita K."/>
            <person name="Lapidus A."/>
            <person name="Lardinois S."/>
            <person name="Lauber J."/>
            <person name="Lazarevic V."/>
            <person name="Lee S.-M."/>
            <person name="Levine A."/>
            <person name="Liu H."/>
            <person name="Masuda S."/>
            <person name="Mauel C."/>
            <person name="Medigue C."/>
            <person name="Medina N."/>
            <person name="Mellado R.P."/>
            <person name="Mizuno M."/>
            <person name="Moestl D."/>
            <person name="Nakai S."/>
            <person name="Noback M."/>
            <person name="Noone D."/>
            <person name="O'Reilly M."/>
            <person name="Ogawa K."/>
            <person name="Ogiwara A."/>
            <person name="Oudega B."/>
            <person name="Park S.-H."/>
            <person name="Parro V."/>
            <person name="Pohl T.M."/>
            <person name="Portetelle D."/>
            <person name="Porwollik S."/>
            <person name="Prescott A.M."/>
            <person name="Presecan E."/>
            <person name="Pujic P."/>
            <person name="Purnelle B."/>
            <person name="Rapoport G."/>
            <person name="Rey M."/>
            <person name="Reynolds S."/>
            <person name="Rieger M."/>
            <person name="Rivolta C."/>
            <person name="Rocha E."/>
            <person name="Roche B."/>
            <person name="Rose M."/>
            <person name="Sadaie Y."/>
            <person name="Sato T."/>
            <person name="Scanlan E."/>
            <person name="Schleich S."/>
            <person name="Schroeter R."/>
            <person name="Scoffone F."/>
            <person name="Sekiguchi J."/>
            <person name="Sekowska A."/>
            <person name="Seror S.J."/>
            <person name="Serror P."/>
            <person name="Shin B.-S."/>
            <person name="Soldo B."/>
            <person name="Sorokin A."/>
            <person name="Tacconi E."/>
            <person name="Takagi T."/>
            <person name="Takahashi H."/>
            <person name="Takemaru K."/>
            <person name="Takeuchi M."/>
            <person name="Tamakoshi A."/>
            <person name="Tanaka T."/>
            <person name="Terpstra P."/>
            <person name="Tognoni A."/>
            <person name="Tosato V."/>
            <person name="Uchiyama S."/>
            <person name="Vandenbol M."/>
            <person name="Vannier F."/>
            <person name="Vassarotti A."/>
            <person name="Viari A."/>
            <person name="Wambutt R."/>
            <person name="Wedler E."/>
            <person name="Wedler H."/>
            <person name="Weitzenegger T."/>
            <person name="Winters P."/>
            <person name="Wipat A."/>
            <person name="Yamamoto H."/>
            <person name="Yamane K."/>
            <person name="Yasumoto K."/>
            <person name="Yata K."/>
            <person name="Yoshida K."/>
            <person name="Yoshikawa H.-F."/>
            <person name="Zumstein E."/>
            <person name="Yoshikawa H."/>
            <person name="Danchin A."/>
        </authorList>
    </citation>
    <scope>NUCLEOTIDE SEQUENCE [LARGE SCALE GENOMIC DNA]</scope>
    <source>
        <strain>168</strain>
    </source>
</reference>
<reference key="3">
    <citation type="journal article" date="2009" name="Microbiology">
        <title>From a consortium sequence to a unified sequence: the Bacillus subtilis 168 reference genome a decade later.</title>
        <authorList>
            <person name="Barbe V."/>
            <person name="Cruveiller S."/>
            <person name="Kunst F."/>
            <person name="Lenoble P."/>
            <person name="Meurice G."/>
            <person name="Sekowska A."/>
            <person name="Vallenet D."/>
            <person name="Wang T."/>
            <person name="Moszer I."/>
            <person name="Medigue C."/>
            <person name="Danchin A."/>
        </authorList>
    </citation>
    <scope>SEQUENCE REVISION TO 169-170</scope>
</reference>
<reference key="4">
    <citation type="journal article" date="1995" name="J. Biol. Chem.">
        <title>Incorporation of D-alanine into lipoteichoic acid and wall teichoic acid in Bacillus subtilis. Identification of genes and regulation.</title>
        <authorList>
            <person name="Perego M."/>
            <person name="Glaser P."/>
            <person name="Minutello A."/>
            <person name="Strauch M.A."/>
            <person name="Leopold K."/>
            <person name="Fischer W."/>
        </authorList>
    </citation>
    <scope>DISRUPTION PHENOTYPE</scope>
</reference>
<evidence type="ECO:0000250" key="1"/>
<evidence type="ECO:0000255" key="2">
    <source>
        <dbReference type="PROSITE-ProRule" id="PRU10001"/>
    </source>
</evidence>
<evidence type="ECO:0000269" key="3">
    <source>
    </source>
</evidence>
<evidence type="ECO:0000305" key="4"/>
<gene>
    <name type="primary">dltE</name>
    <name type="ordered locus">BSU38540</name>
    <name type="ORF">ipa-1r</name>
</gene>